<comment type="subcellular location">
    <subcellularLocation>
        <location evidence="2">Nucleus</location>
    </subcellularLocation>
</comment>
<comment type="similarity">
    <text evidence="2">Belongs to the snail C2H2-type zinc-finger protein family.</text>
</comment>
<sequence length="46" mass="5292">IRTHTLPCKCTICPKAFSRPWLLQGHIRTHTGEKPFSCTYCNRAFA</sequence>
<feature type="chain" id="PRO_0000047048" description="Escargot/snail protein homolog">
    <location>
        <begin position="1" status="less than"/>
        <end position="46" status="greater than"/>
    </location>
</feature>
<feature type="zinc finger region" description="C2H2-type 1" evidence="1">
    <location>
        <begin position="1" status="less than"/>
        <end position="4"/>
    </location>
</feature>
<feature type="zinc finger region" description="C2H2-type 2" evidence="1">
    <location>
        <begin position="8"/>
        <end position="30"/>
    </location>
</feature>
<feature type="zinc finger region" description="C2H2-type 3" evidence="1">
    <location>
        <begin position="37"/>
        <end position="46" status="greater than"/>
    </location>
</feature>
<feature type="non-terminal residue">
    <location>
        <position position="1"/>
    </location>
</feature>
<feature type="non-terminal residue">
    <location>
        <position position="46"/>
    </location>
</feature>
<accession>Q01800</accession>
<evidence type="ECO:0000255" key="1">
    <source>
        <dbReference type="PROSITE-ProRule" id="PRU00042"/>
    </source>
</evidence>
<evidence type="ECO:0000305" key="2"/>
<organism>
    <name type="scientific">Tribolium castaneum</name>
    <name type="common">Red flour beetle</name>
    <dbReference type="NCBI Taxonomy" id="7070"/>
    <lineage>
        <taxon>Eukaryota</taxon>
        <taxon>Metazoa</taxon>
        <taxon>Ecdysozoa</taxon>
        <taxon>Arthropoda</taxon>
        <taxon>Hexapoda</taxon>
        <taxon>Insecta</taxon>
        <taxon>Pterygota</taxon>
        <taxon>Neoptera</taxon>
        <taxon>Endopterygota</taxon>
        <taxon>Coleoptera</taxon>
        <taxon>Polyphaga</taxon>
        <taxon>Cucujiformia</taxon>
        <taxon>Tenebrionidae</taxon>
        <taxon>Tenebrionidae incertae sedis</taxon>
        <taxon>Tribolium</taxon>
    </lineage>
</organism>
<reference key="1">
    <citation type="journal article" date="1992" name="Proc. Natl. Acad. Sci. U.S.A.">
        <title>Evolutionary conservation pattern of zinc-finger domains of Drosophila segmentation genes.</title>
        <authorList>
            <person name="Sommer R.J."/>
            <person name="Retzlaff M."/>
            <person name="Goerlich K."/>
            <person name="Sander K."/>
            <person name="Tautz D."/>
        </authorList>
    </citation>
    <scope>NUCLEOTIDE SEQUENCE [GENOMIC DNA]</scope>
</reference>
<proteinExistence type="inferred from homology"/>
<keyword id="KW-0238">DNA-binding</keyword>
<keyword id="KW-0479">Metal-binding</keyword>
<keyword id="KW-0539">Nucleus</keyword>
<keyword id="KW-0677">Repeat</keyword>
<keyword id="KW-0862">Zinc</keyword>
<keyword id="KW-0863">Zinc-finger</keyword>
<name>ESCA_TRICA</name>
<protein>
    <recommendedName>
        <fullName>Escargot/snail protein homolog</fullName>
    </recommendedName>
</protein>
<dbReference type="EMBL" id="L01617">
    <property type="protein sequence ID" value="AAA30097.1"/>
    <property type="molecule type" value="Genomic_DNA"/>
</dbReference>
<dbReference type="SMR" id="Q01800"/>
<dbReference type="eggNOG" id="KOG2462">
    <property type="taxonomic scope" value="Eukaryota"/>
</dbReference>
<dbReference type="HOGENOM" id="CLU_030677_1_0_1"/>
<dbReference type="GO" id="GO:0005634">
    <property type="term" value="C:nucleus"/>
    <property type="evidence" value="ECO:0007669"/>
    <property type="project" value="UniProtKB-SubCell"/>
</dbReference>
<dbReference type="GO" id="GO:0003677">
    <property type="term" value="F:DNA binding"/>
    <property type="evidence" value="ECO:0007669"/>
    <property type="project" value="UniProtKB-KW"/>
</dbReference>
<dbReference type="GO" id="GO:0008270">
    <property type="term" value="F:zinc ion binding"/>
    <property type="evidence" value="ECO:0007669"/>
    <property type="project" value="UniProtKB-KW"/>
</dbReference>
<dbReference type="FunFam" id="3.30.160.60:FF:000043">
    <property type="entry name" value="Scratch family zinc finger 2"/>
    <property type="match status" value="1"/>
</dbReference>
<dbReference type="Gene3D" id="3.30.160.60">
    <property type="entry name" value="Classic Zinc Finger"/>
    <property type="match status" value="2"/>
</dbReference>
<dbReference type="InterPro" id="IPR050527">
    <property type="entry name" value="Snail/Krueppel_Znf"/>
</dbReference>
<dbReference type="InterPro" id="IPR036236">
    <property type="entry name" value="Znf_C2H2_sf"/>
</dbReference>
<dbReference type="InterPro" id="IPR013087">
    <property type="entry name" value="Znf_C2H2_type"/>
</dbReference>
<dbReference type="PANTHER" id="PTHR24388:SF54">
    <property type="entry name" value="PROTEIN ESCARGOT"/>
    <property type="match status" value="1"/>
</dbReference>
<dbReference type="PANTHER" id="PTHR24388">
    <property type="entry name" value="ZINC FINGER PROTEIN"/>
    <property type="match status" value="1"/>
</dbReference>
<dbReference type="Pfam" id="PF00096">
    <property type="entry name" value="zf-C2H2"/>
    <property type="match status" value="1"/>
</dbReference>
<dbReference type="SUPFAM" id="SSF57667">
    <property type="entry name" value="beta-beta-alpha zinc fingers"/>
    <property type="match status" value="1"/>
</dbReference>
<dbReference type="PROSITE" id="PS00028">
    <property type="entry name" value="ZINC_FINGER_C2H2_1"/>
    <property type="match status" value="1"/>
</dbReference>
<dbReference type="PROSITE" id="PS50157">
    <property type="entry name" value="ZINC_FINGER_C2H2_2"/>
    <property type="match status" value="1"/>
</dbReference>